<name>AXHA2_EMENI</name>
<evidence type="ECO:0000250" key="1"/>
<evidence type="ECO:0000255" key="2"/>
<evidence type="ECO:0000269" key="3">
    <source>
    </source>
</evidence>
<evidence type="ECO:0000305" key="4"/>
<evidence type="ECO:0007829" key="5">
    <source>
        <dbReference type="PDB" id="5UBJ"/>
    </source>
</evidence>
<feature type="signal peptide" evidence="2">
    <location>
        <begin position="1"/>
        <end position="22"/>
    </location>
</feature>
<feature type="chain" id="PRO_0000393537" description="Alpha-L-arabinofuranosidase axhA-2">
    <location>
        <begin position="23"/>
        <end position="325"/>
    </location>
</feature>
<feature type="glycosylation site" description="N-linked (GlcNAc...) asparagine" evidence="2">
    <location>
        <position position="83"/>
    </location>
</feature>
<feature type="strand" evidence="5">
    <location>
        <begin position="32"/>
        <end position="34"/>
    </location>
</feature>
<feature type="strand" evidence="5">
    <location>
        <begin position="45"/>
        <end position="56"/>
    </location>
</feature>
<feature type="strand" evidence="5">
    <location>
        <begin position="59"/>
        <end position="71"/>
    </location>
</feature>
<feature type="strand" evidence="5">
    <location>
        <begin position="73"/>
        <end position="78"/>
    </location>
</feature>
<feature type="strand" evidence="5">
    <location>
        <begin position="81"/>
        <end position="83"/>
    </location>
</feature>
<feature type="helix" evidence="5">
    <location>
        <begin position="84"/>
        <end position="89"/>
    </location>
</feature>
<feature type="strand" evidence="5">
    <location>
        <begin position="92"/>
        <end position="94"/>
    </location>
</feature>
<feature type="strand" evidence="5">
    <location>
        <begin position="100"/>
        <end position="107"/>
    </location>
</feature>
<feature type="helix" evidence="5">
    <location>
        <begin position="108"/>
        <end position="110"/>
    </location>
</feature>
<feature type="strand" evidence="5">
    <location>
        <begin position="112"/>
        <end position="130"/>
    </location>
</feature>
<feature type="strand" evidence="5">
    <location>
        <begin position="142"/>
        <end position="145"/>
    </location>
</feature>
<feature type="strand" evidence="5">
    <location>
        <begin position="156"/>
        <end position="163"/>
    </location>
</feature>
<feature type="strand" evidence="5">
    <location>
        <begin position="165"/>
        <end position="173"/>
    </location>
</feature>
<feature type="strand" evidence="5">
    <location>
        <begin position="175"/>
        <end position="185"/>
    </location>
</feature>
<feature type="helix" evidence="5">
    <location>
        <begin position="186"/>
        <end position="188"/>
    </location>
</feature>
<feature type="strand" evidence="5">
    <location>
        <begin position="198"/>
        <end position="202"/>
    </location>
</feature>
<feature type="turn" evidence="5">
    <location>
        <begin position="205"/>
        <end position="207"/>
    </location>
</feature>
<feature type="strand" evidence="5">
    <location>
        <begin position="210"/>
        <end position="217"/>
    </location>
</feature>
<feature type="strand" evidence="5">
    <location>
        <begin position="225"/>
        <end position="232"/>
    </location>
</feature>
<feature type="strand" evidence="5">
    <location>
        <begin position="234"/>
        <end position="246"/>
    </location>
</feature>
<feature type="strand" evidence="5">
    <location>
        <begin position="252"/>
        <end position="264"/>
    </location>
</feature>
<feature type="turn" evidence="5">
    <location>
        <begin position="265"/>
        <end position="267"/>
    </location>
</feature>
<feature type="strand" evidence="5">
    <location>
        <begin position="277"/>
        <end position="281"/>
    </location>
</feature>
<feature type="helix" evidence="5">
    <location>
        <begin position="294"/>
        <end position="296"/>
    </location>
</feature>
<feature type="strand" evidence="5">
    <location>
        <begin position="298"/>
        <end position="303"/>
    </location>
</feature>
<feature type="strand" evidence="5">
    <location>
        <begin position="318"/>
        <end position="324"/>
    </location>
</feature>
<organism>
    <name type="scientific">Emericella nidulans (strain FGSC A4 / ATCC 38163 / CBS 112.46 / NRRL 194 / M139)</name>
    <name type="common">Aspergillus nidulans</name>
    <dbReference type="NCBI Taxonomy" id="227321"/>
    <lineage>
        <taxon>Eukaryota</taxon>
        <taxon>Fungi</taxon>
        <taxon>Dikarya</taxon>
        <taxon>Ascomycota</taxon>
        <taxon>Pezizomycotina</taxon>
        <taxon>Eurotiomycetes</taxon>
        <taxon>Eurotiomycetidae</taxon>
        <taxon>Eurotiales</taxon>
        <taxon>Aspergillaceae</taxon>
        <taxon>Aspergillus</taxon>
        <taxon>Aspergillus subgen. Nidulantes</taxon>
    </lineage>
</organism>
<sequence>MRNLSTWPTFAALLWSAPRVLAQCGLPSTYSWTSTGPLAEPKDGWASLKDFTAVPYNGQYLVYATYHDTGTSWGSMNFGLFSNWSDMATASQNAMTQSTVAPTLFYFEPKDVWILAYQWGPTAFSYLTSSDPTDANGWSSPQPLFSGSISDSDTGVIDQTVIGDSTTMYLFFAGDNGRIYRASMPIDQFPGDFGTESEIILSDERNNLFEAVQVYTVSGQSKDTYLMIVEAIGAQGRYFRSFTADSLGGSWTPQAATESAPFAGKANSGATWTDDISHGDLVRSTPDQTMSIDPCNLQLLYQGRDPSLNPGYDLLPYRPGLLTLK</sequence>
<gene>
    <name type="primary">axhA-2</name>
    <name type="ORF">AN7908</name>
</gene>
<dbReference type="EC" id="3.2.1.55"/>
<dbReference type="EMBL" id="AACD01000135">
    <property type="protein sequence ID" value="EAA59562.1"/>
    <property type="molecule type" value="Genomic_DNA"/>
</dbReference>
<dbReference type="EMBL" id="BN001302">
    <property type="protein sequence ID" value="CBF73503.1"/>
    <property type="molecule type" value="Genomic_DNA"/>
</dbReference>
<dbReference type="RefSeq" id="XP_681177.1">
    <property type="nucleotide sequence ID" value="XM_676085.1"/>
</dbReference>
<dbReference type="PDB" id="5UBJ">
    <property type="method" value="X-ray"/>
    <property type="resolution" value="1.70 A"/>
    <property type="chains" value="A=1-325"/>
</dbReference>
<dbReference type="PDBsum" id="5UBJ"/>
<dbReference type="SMR" id="Q5AUX2"/>
<dbReference type="STRING" id="227321.Q5AUX2"/>
<dbReference type="CAZy" id="GH62">
    <property type="family name" value="Glycoside Hydrolase Family 62"/>
</dbReference>
<dbReference type="GlyCosmos" id="Q5AUX2">
    <property type="glycosylation" value="1 site, No reported glycans"/>
</dbReference>
<dbReference type="EnsemblFungi" id="CBF73503">
    <property type="protein sequence ID" value="CBF73503"/>
    <property type="gene ID" value="ANIA_07908"/>
</dbReference>
<dbReference type="KEGG" id="ani:ANIA_07908"/>
<dbReference type="VEuPathDB" id="FungiDB:AN7908"/>
<dbReference type="eggNOG" id="ENOG502QUZT">
    <property type="taxonomic scope" value="Eukaryota"/>
</dbReference>
<dbReference type="HOGENOM" id="CLU_041805_0_0_1"/>
<dbReference type="InParanoid" id="Q5AUX2"/>
<dbReference type="OMA" id="AYQWGSS"/>
<dbReference type="OrthoDB" id="3156236at2759"/>
<dbReference type="BRENDA" id="3.2.1.55">
    <property type="organism ID" value="517"/>
</dbReference>
<dbReference type="Proteomes" id="UP000000560">
    <property type="component" value="Chromosome II"/>
</dbReference>
<dbReference type="GO" id="GO:0005576">
    <property type="term" value="C:extracellular region"/>
    <property type="evidence" value="ECO:0007669"/>
    <property type="project" value="UniProtKB-SubCell"/>
</dbReference>
<dbReference type="GO" id="GO:0046556">
    <property type="term" value="F:alpha-L-arabinofuranosidase activity"/>
    <property type="evidence" value="ECO:0000314"/>
    <property type="project" value="UniProtKB"/>
</dbReference>
<dbReference type="GO" id="GO:0019566">
    <property type="term" value="P:arabinose metabolic process"/>
    <property type="evidence" value="ECO:0000314"/>
    <property type="project" value="UniProtKB"/>
</dbReference>
<dbReference type="GO" id="GO:0046373">
    <property type="term" value="P:L-arabinose metabolic process"/>
    <property type="evidence" value="ECO:0007669"/>
    <property type="project" value="InterPro"/>
</dbReference>
<dbReference type="GO" id="GO:0045490">
    <property type="term" value="P:pectin catabolic process"/>
    <property type="evidence" value="ECO:0000314"/>
    <property type="project" value="UniProtKB"/>
</dbReference>
<dbReference type="GO" id="GO:0045493">
    <property type="term" value="P:xylan catabolic process"/>
    <property type="evidence" value="ECO:0007669"/>
    <property type="project" value="UniProtKB-KW"/>
</dbReference>
<dbReference type="CDD" id="cd08987">
    <property type="entry name" value="GH62"/>
    <property type="match status" value="1"/>
</dbReference>
<dbReference type="Gene3D" id="2.115.10.20">
    <property type="entry name" value="Glycosyl hydrolase domain, family 43"/>
    <property type="match status" value="1"/>
</dbReference>
<dbReference type="InterPro" id="IPR005193">
    <property type="entry name" value="GH62_arabinosidase"/>
</dbReference>
<dbReference type="InterPro" id="IPR023296">
    <property type="entry name" value="Glyco_hydro_beta-prop_sf"/>
</dbReference>
<dbReference type="PANTHER" id="PTHR40631">
    <property type="entry name" value="ALPHA-L-ARABINOFURANOSIDASE AXHA-2-RELATED"/>
    <property type="match status" value="1"/>
</dbReference>
<dbReference type="PANTHER" id="PTHR40631:SF1">
    <property type="entry name" value="ALPHA-L-ARABINOFURANOSIDASE AXHA-2-RELATED"/>
    <property type="match status" value="1"/>
</dbReference>
<dbReference type="Pfam" id="PF03664">
    <property type="entry name" value="Glyco_hydro_62"/>
    <property type="match status" value="1"/>
</dbReference>
<dbReference type="SUPFAM" id="SSF75005">
    <property type="entry name" value="Arabinanase/levansucrase/invertase"/>
    <property type="match status" value="1"/>
</dbReference>
<proteinExistence type="evidence at protein level"/>
<keyword id="KW-0002">3D-structure</keyword>
<keyword id="KW-0119">Carbohydrate metabolism</keyword>
<keyword id="KW-0325">Glycoprotein</keyword>
<keyword id="KW-0326">Glycosidase</keyword>
<keyword id="KW-0378">Hydrolase</keyword>
<keyword id="KW-0624">Polysaccharide degradation</keyword>
<keyword id="KW-1185">Reference proteome</keyword>
<keyword id="KW-0964">Secreted</keyword>
<keyword id="KW-0732">Signal</keyword>
<keyword id="KW-0858">Xylan degradation</keyword>
<reference key="1">
    <citation type="journal article" date="2005" name="Nature">
        <title>Sequencing of Aspergillus nidulans and comparative analysis with A. fumigatus and A. oryzae.</title>
        <authorList>
            <person name="Galagan J.E."/>
            <person name="Calvo S.E."/>
            <person name="Cuomo C."/>
            <person name="Ma L.-J."/>
            <person name="Wortman J.R."/>
            <person name="Batzoglou S."/>
            <person name="Lee S.-I."/>
            <person name="Bastuerkmen M."/>
            <person name="Spevak C.C."/>
            <person name="Clutterbuck J."/>
            <person name="Kapitonov V."/>
            <person name="Jurka J."/>
            <person name="Scazzocchio C."/>
            <person name="Farman M.L."/>
            <person name="Butler J."/>
            <person name="Purcell S."/>
            <person name="Harris S."/>
            <person name="Braus G.H."/>
            <person name="Draht O."/>
            <person name="Busch S."/>
            <person name="D'Enfert C."/>
            <person name="Bouchier C."/>
            <person name="Goldman G.H."/>
            <person name="Bell-Pedersen D."/>
            <person name="Griffiths-Jones S."/>
            <person name="Doonan J.H."/>
            <person name="Yu J."/>
            <person name="Vienken K."/>
            <person name="Pain A."/>
            <person name="Freitag M."/>
            <person name="Selker E.U."/>
            <person name="Archer D.B."/>
            <person name="Penalva M.A."/>
            <person name="Oakley B.R."/>
            <person name="Momany M."/>
            <person name="Tanaka T."/>
            <person name="Kumagai T."/>
            <person name="Asai K."/>
            <person name="Machida M."/>
            <person name="Nierman W.C."/>
            <person name="Denning D.W."/>
            <person name="Caddick M.X."/>
            <person name="Hynes M."/>
            <person name="Paoletti M."/>
            <person name="Fischer R."/>
            <person name="Miller B.L."/>
            <person name="Dyer P.S."/>
            <person name="Sachs M.S."/>
            <person name="Osmani S.A."/>
            <person name="Birren B.W."/>
        </authorList>
    </citation>
    <scope>NUCLEOTIDE SEQUENCE [LARGE SCALE GENOMIC DNA]</scope>
    <source>
        <strain>FGSC A4 / ATCC 38163 / CBS 112.46 / NRRL 194 / M139</strain>
    </source>
</reference>
<reference key="2">
    <citation type="journal article" date="2009" name="Fungal Genet. Biol.">
        <title>The 2008 update of the Aspergillus nidulans genome annotation: a community effort.</title>
        <authorList>
            <person name="Wortman J.R."/>
            <person name="Gilsenan J.M."/>
            <person name="Joardar V."/>
            <person name="Deegan J."/>
            <person name="Clutterbuck J."/>
            <person name="Andersen M.R."/>
            <person name="Archer D."/>
            <person name="Bencina M."/>
            <person name="Braus G."/>
            <person name="Coutinho P."/>
            <person name="von Dohren H."/>
            <person name="Doonan J."/>
            <person name="Driessen A.J."/>
            <person name="Durek P."/>
            <person name="Espeso E."/>
            <person name="Fekete E."/>
            <person name="Flipphi M."/>
            <person name="Estrada C.G."/>
            <person name="Geysens S."/>
            <person name="Goldman G."/>
            <person name="de Groot P.W."/>
            <person name="Hansen K."/>
            <person name="Harris S.D."/>
            <person name="Heinekamp T."/>
            <person name="Helmstaedt K."/>
            <person name="Henrissat B."/>
            <person name="Hofmann G."/>
            <person name="Homan T."/>
            <person name="Horio T."/>
            <person name="Horiuchi H."/>
            <person name="James S."/>
            <person name="Jones M."/>
            <person name="Karaffa L."/>
            <person name="Karanyi Z."/>
            <person name="Kato M."/>
            <person name="Keller N."/>
            <person name="Kelly D.E."/>
            <person name="Kiel J.A."/>
            <person name="Kim J.M."/>
            <person name="van der Klei I.J."/>
            <person name="Klis F.M."/>
            <person name="Kovalchuk A."/>
            <person name="Krasevec N."/>
            <person name="Kubicek C.P."/>
            <person name="Liu B."/>
            <person name="Maccabe A."/>
            <person name="Meyer V."/>
            <person name="Mirabito P."/>
            <person name="Miskei M."/>
            <person name="Mos M."/>
            <person name="Mullins J."/>
            <person name="Nelson D.R."/>
            <person name="Nielsen J."/>
            <person name="Oakley B.R."/>
            <person name="Osmani S.A."/>
            <person name="Pakula T."/>
            <person name="Paszewski A."/>
            <person name="Paulsen I."/>
            <person name="Pilsyk S."/>
            <person name="Pocsi I."/>
            <person name="Punt P.J."/>
            <person name="Ram A.F."/>
            <person name="Ren Q."/>
            <person name="Robellet X."/>
            <person name="Robson G."/>
            <person name="Seiboth B."/>
            <person name="van Solingen P."/>
            <person name="Specht T."/>
            <person name="Sun J."/>
            <person name="Taheri-Talesh N."/>
            <person name="Takeshita N."/>
            <person name="Ussery D."/>
            <person name="vanKuyk P.A."/>
            <person name="Visser H."/>
            <person name="van de Vondervoort P.J."/>
            <person name="de Vries R.P."/>
            <person name="Walton J."/>
            <person name="Xiang X."/>
            <person name="Xiong Y."/>
            <person name="Zeng A.P."/>
            <person name="Brandt B.W."/>
            <person name="Cornell M.J."/>
            <person name="van den Hondel C.A."/>
            <person name="Visser J."/>
            <person name="Oliver S.G."/>
            <person name="Turner G."/>
        </authorList>
    </citation>
    <scope>GENOME REANNOTATION</scope>
    <source>
        <strain>FGSC A4 / ATCC 38163 / CBS 112.46 / NRRL 194 / M139</strain>
    </source>
</reference>
<reference key="3">
    <citation type="journal article" date="2006" name="Proc. Natl. Acad. Sci. U.S.A.">
        <title>Development and application of a suite of polysaccharide-degrading enzymes for analyzing plant cell walls.</title>
        <authorList>
            <person name="Bauer S."/>
            <person name="Vasu P."/>
            <person name="Persson S."/>
            <person name="Mort A.J."/>
            <person name="Somerville C.R."/>
        </authorList>
    </citation>
    <scope>FUNCTION</scope>
    <scope>BIOPHYSICOCHEMICAL PROPERTIES</scope>
</reference>
<comment type="function">
    <text evidence="1 3">Alpha-L-arabinofuranosidase involved in the hydrolysis of xylan, a major structural heterogeneous polysaccharide found in plant biomass representing the second most abundant polysaccharide in the biosphere, after cellulose. Releases L-arabinose from arabinoxylan (By similarity).</text>
</comment>
<comment type="catalytic activity">
    <reaction>
        <text>Hydrolysis of terminal non-reducing alpha-L-arabinofuranoside residues in alpha-L-arabinosides.</text>
        <dbReference type="EC" id="3.2.1.55"/>
    </reaction>
</comment>
<comment type="biophysicochemical properties">
    <phDependence>
        <text evidence="3">Optimum pH is 5.4.</text>
    </phDependence>
    <temperatureDependence>
        <text evidence="3">Optimum temperature is 47 degrees Celsius.</text>
    </temperatureDependence>
</comment>
<comment type="subcellular location">
    <subcellularLocation>
        <location>Secreted</location>
    </subcellularLocation>
</comment>
<comment type="similarity">
    <text evidence="4">Belongs to the glycosyl hydrolase 62 family.</text>
</comment>
<protein>
    <recommendedName>
        <fullName>Alpha-L-arabinofuranosidase axhA-2</fullName>
        <ecNumber>3.2.1.55</ecNumber>
    </recommendedName>
    <alternativeName>
        <fullName>Arabinoxylan arabinofuranohydrolase axhA-2</fullName>
    </alternativeName>
</protein>
<accession>Q5AUX2</accession>
<accession>C8V4U9</accession>